<name>ADHR_BACSU</name>
<feature type="chain" id="PRO_0000361681" description="HTH-type transcriptional regulator AdhR">
    <location>
        <begin position="1"/>
        <end position="140"/>
    </location>
</feature>
<feature type="domain" description="HTH merR-type" evidence="2">
    <location>
        <begin position="1"/>
        <end position="69"/>
    </location>
</feature>
<feature type="DNA-binding region" description="H-T-H motif" evidence="2">
    <location>
        <begin position="3"/>
        <end position="22"/>
    </location>
</feature>
<feature type="region of interest" description="Disordered" evidence="3">
    <location>
        <begin position="120"/>
        <end position="140"/>
    </location>
</feature>
<feature type="coiled-coil region" evidence="1">
    <location>
        <begin position="75"/>
        <end position="125"/>
    </location>
</feature>
<feature type="mutagenesis site" description="Required to activate transcription of the adhA-yraA operon." evidence="4">
    <original>C</original>
    <variation>A</variation>
    <location>
        <position position="52"/>
    </location>
</feature>
<feature type="sequence conflict" description="In Ref. 1; CAA63468." evidence="5" ref="1">
    <original>D</original>
    <variation>H</variation>
    <location>
        <position position="74"/>
    </location>
</feature>
<reference key="1">
    <citation type="journal article" date="1997" name="Microbiology">
        <title>A 23911 bp region of the Bacillus subtilis genome comprising genes located upstream and downstream of the lev operon.</title>
        <authorList>
            <person name="Parro V."/>
            <person name="San Roman M."/>
            <person name="Galindo I."/>
            <person name="Purnelle B."/>
            <person name="Bolotin A."/>
            <person name="Sorokin A."/>
            <person name="Mellado R.P."/>
        </authorList>
    </citation>
    <scope>NUCLEOTIDE SEQUENCE [GENOMIC DNA]</scope>
    <source>
        <strain>168</strain>
    </source>
</reference>
<reference key="2">
    <citation type="journal article" date="1997" name="Nature">
        <title>The complete genome sequence of the Gram-positive bacterium Bacillus subtilis.</title>
        <authorList>
            <person name="Kunst F."/>
            <person name="Ogasawara N."/>
            <person name="Moszer I."/>
            <person name="Albertini A.M."/>
            <person name="Alloni G."/>
            <person name="Azevedo V."/>
            <person name="Bertero M.G."/>
            <person name="Bessieres P."/>
            <person name="Bolotin A."/>
            <person name="Borchert S."/>
            <person name="Borriss R."/>
            <person name="Boursier L."/>
            <person name="Brans A."/>
            <person name="Braun M."/>
            <person name="Brignell S.C."/>
            <person name="Bron S."/>
            <person name="Brouillet S."/>
            <person name="Bruschi C.V."/>
            <person name="Caldwell B."/>
            <person name="Capuano V."/>
            <person name="Carter N.M."/>
            <person name="Choi S.-K."/>
            <person name="Codani J.-J."/>
            <person name="Connerton I.F."/>
            <person name="Cummings N.J."/>
            <person name="Daniel R.A."/>
            <person name="Denizot F."/>
            <person name="Devine K.M."/>
            <person name="Duesterhoeft A."/>
            <person name="Ehrlich S.D."/>
            <person name="Emmerson P.T."/>
            <person name="Entian K.-D."/>
            <person name="Errington J."/>
            <person name="Fabret C."/>
            <person name="Ferrari E."/>
            <person name="Foulger D."/>
            <person name="Fritz C."/>
            <person name="Fujita M."/>
            <person name="Fujita Y."/>
            <person name="Fuma S."/>
            <person name="Galizzi A."/>
            <person name="Galleron N."/>
            <person name="Ghim S.-Y."/>
            <person name="Glaser P."/>
            <person name="Goffeau A."/>
            <person name="Golightly E.J."/>
            <person name="Grandi G."/>
            <person name="Guiseppi G."/>
            <person name="Guy B.J."/>
            <person name="Haga K."/>
            <person name="Haiech J."/>
            <person name="Harwood C.R."/>
            <person name="Henaut A."/>
            <person name="Hilbert H."/>
            <person name="Holsappel S."/>
            <person name="Hosono S."/>
            <person name="Hullo M.-F."/>
            <person name="Itaya M."/>
            <person name="Jones L.-M."/>
            <person name="Joris B."/>
            <person name="Karamata D."/>
            <person name="Kasahara Y."/>
            <person name="Klaerr-Blanchard M."/>
            <person name="Klein C."/>
            <person name="Kobayashi Y."/>
            <person name="Koetter P."/>
            <person name="Koningstein G."/>
            <person name="Krogh S."/>
            <person name="Kumano M."/>
            <person name="Kurita K."/>
            <person name="Lapidus A."/>
            <person name="Lardinois S."/>
            <person name="Lauber J."/>
            <person name="Lazarevic V."/>
            <person name="Lee S.-M."/>
            <person name="Levine A."/>
            <person name="Liu H."/>
            <person name="Masuda S."/>
            <person name="Mauel C."/>
            <person name="Medigue C."/>
            <person name="Medina N."/>
            <person name="Mellado R.P."/>
            <person name="Mizuno M."/>
            <person name="Moestl D."/>
            <person name="Nakai S."/>
            <person name="Noback M."/>
            <person name="Noone D."/>
            <person name="O'Reilly M."/>
            <person name="Ogawa K."/>
            <person name="Ogiwara A."/>
            <person name="Oudega B."/>
            <person name="Park S.-H."/>
            <person name="Parro V."/>
            <person name="Pohl T.M."/>
            <person name="Portetelle D."/>
            <person name="Porwollik S."/>
            <person name="Prescott A.M."/>
            <person name="Presecan E."/>
            <person name="Pujic P."/>
            <person name="Purnelle B."/>
            <person name="Rapoport G."/>
            <person name="Rey M."/>
            <person name="Reynolds S."/>
            <person name="Rieger M."/>
            <person name="Rivolta C."/>
            <person name="Rocha E."/>
            <person name="Roche B."/>
            <person name="Rose M."/>
            <person name="Sadaie Y."/>
            <person name="Sato T."/>
            <person name="Scanlan E."/>
            <person name="Schleich S."/>
            <person name="Schroeter R."/>
            <person name="Scoffone F."/>
            <person name="Sekiguchi J."/>
            <person name="Sekowska A."/>
            <person name="Seror S.J."/>
            <person name="Serror P."/>
            <person name="Shin B.-S."/>
            <person name="Soldo B."/>
            <person name="Sorokin A."/>
            <person name="Tacconi E."/>
            <person name="Takagi T."/>
            <person name="Takahashi H."/>
            <person name="Takemaru K."/>
            <person name="Takeuchi M."/>
            <person name="Tamakoshi A."/>
            <person name="Tanaka T."/>
            <person name="Terpstra P."/>
            <person name="Tognoni A."/>
            <person name="Tosato V."/>
            <person name="Uchiyama S."/>
            <person name="Vandenbol M."/>
            <person name="Vannier F."/>
            <person name="Vassarotti A."/>
            <person name="Viari A."/>
            <person name="Wambutt R."/>
            <person name="Wedler E."/>
            <person name="Wedler H."/>
            <person name="Weitzenegger T."/>
            <person name="Winters P."/>
            <person name="Wipat A."/>
            <person name="Yamamoto H."/>
            <person name="Yamane K."/>
            <person name="Yasumoto K."/>
            <person name="Yata K."/>
            <person name="Yoshida K."/>
            <person name="Yoshikawa H.-F."/>
            <person name="Zumstein E."/>
            <person name="Yoshikawa H."/>
            <person name="Danchin A."/>
        </authorList>
    </citation>
    <scope>NUCLEOTIDE SEQUENCE [LARGE SCALE GENOMIC DNA]</scope>
    <source>
        <strain>168</strain>
    </source>
</reference>
<reference key="3">
    <citation type="journal article" date="2009" name="Microbiology">
        <title>From a consortium sequence to a unified sequence: the Bacillus subtilis 168 reference genome a decade later.</title>
        <authorList>
            <person name="Barbe V."/>
            <person name="Cruveiller S."/>
            <person name="Kunst F."/>
            <person name="Lenoble P."/>
            <person name="Meurice G."/>
            <person name="Sekowska A."/>
            <person name="Vallenet D."/>
            <person name="Wang T."/>
            <person name="Moszer I."/>
            <person name="Medigue C."/>
            <person name="Danchin A."/>
        </authorList>
    </citation>
    <scope>SEQUENCE REVISION TO 74</scope>
</reference>
<reference key="4">
    <citation type="journal article" date="2009" name="Mol. Microbiol.">
        <title>Genome-wide responses to carbonyl electrophiles in Bacillus subtilis: control of the thiol-dependent formaldehyde dehydrogenase AdhA and cysteine proteinase YraA by the MerR-family regulator YraB (AdhR).</title>
        <authorList>
            <person name="Nguyen T.T.H."/>
            <person name="Eiamphungporn W."/>
            <person name="Maeder U."/>
            <person name="Liebeke M."/>
            <person name="Lalk M."/>
            <person name="Hecker M."/>
            <person name="Helmann J.D."/>
            <person name="Antelmann H."/>
        </authorList>
    </citation>
    <scope>DNA-BINDING</scope>
    <scope>INDUCTION</scope>
    <scope>MUTAGENESIS OF CYS-52</scope>
    <scope>DISRUPTION PHENOTYPE</scope>
    <scope>FUNCTION</scope>
    <source>
        <strain>168</strain>
    </source>
</reference>
<sequence length="140" mass="16416">MNIAQVAKQFGLTAATLRYYERVGLIPPVKRKDSGIRDYDEEDIKWIEFIKCMRNAGLSIEALIEYTTLFTEGDRTVEARKNILADERQRLIEKRKEIDETIKRLDTKIKDYDGKLRENEAKLKSRPKTESLHGSVEQRR</sequence>
<accession>O06008</accession>
<accession>Q795Z1</accession>
<keyword id="KW-0010">Activator</keyword>
<keyword id="KW-0175">Coiled coil</keyword>
<keyword id="KW-0238">DNA-binding</keyword>
<keyword id="KW-1185">Reference proteome</keyword>
<keyword id="KW-0346">Stress response</keyword>
<keyword id="KW-0804">Transcription</keyword>
<keyword id="KW-0805">Transcription regulation</keyword>
<comment type="function">
    <text evidence="4">Transcriptional regulator involved in the response to aldehyde stress. Binds to the promoter region of the adhA-yraA operon, the yraC and its own promoter region; binding is unchanged in the presence of aldehydes.</text>
</comment>
<comment type="induction">
    <text evidence="4">By aldehyde stress, positively regulates its own expression.</text>
</comment>
<comment type="disruption phenotype">
    <text evidence="4">Loss of expression of the adhA-yraA operon in response to formaldehyde and methylgloxal.</text>
</comment>
<gene>
    <name type="primary">adhR</name>
    <name type="synonym">yraB</name>
    <name type="ordered locus">BSU27000</name>
</gene>
<evidence type="ECO:0000255" key="1"/>
<evidence type="ECO:0000255" key="2">
    <source>
        <dbReference type="PROSITE-ProRule" id="PRU00254"/>
    </source>
</evidence>
<evidence type="ECO:0000256" key="3">
    <source>
        <dbReference type="SAM" id="MobiDB-lite"/>
    </source>
</evidence>
<evidence type="ECO:0000269" key="4">
    <source>
    </source>
</evidence>
<evidence type="ECO:0000305" key="5"/>
<protein>
    <recommendedName>
        <fullName>HTH-type transcriptional regulator AdhR</fullName>
    </recommendedName>
</protein>
<proteinExistence type="evidence at protein level"/>
<organism>
    <name type="scientific">Bacillus subtilis (strain 168)</name>
    <dbReference type="NCBI Taxonomy" id="224308"/>
    <lineage>
        <taxon>Bacteria</taxon>
        <taxon>Bacillati</taxon>
        <taxon>Bacillota</taxon>
        <taxon>Bacilli</taxon>
        <taxon>Bacillales</taxon>
        <taxon>Bacillaceae</taxon>
        <taxon>Bacillus</taxon>
    </lineage>
</organism>
<dbReference type="EMBL" id="X92868">
    <property type="protein sequence ID" value="CAA63468.1"/>
    <property type="molecule type" value="Genomic_DNA"/>
</dbReference>
<dbReference type="EMBL" id="AL009126">
    <property type="protein sequence ID" value="CAB14642.2"/>
    <property type="molecule type" value="Genomic_DNA"/>
</dbReference>
<dbReference type="PIR" id="B69970">
    <property type="entry name" value="B69970"/>
</dbReference>
<dbReference type="RefSeq" id="NP_390578.2">
    <property type="nucleotide sequence ID" value="NC_000964.3"/>
</dbReference>
<dbReference type="RefSeq" id="WP_004398725.1">
    <property type="nucleotide sequence ID" value="NZ_OZ025638.1"/>
</dbReference>
<dbReference type="SMR" id="O06008"/>
<dbReference type="FunCoup" id="O06008">
    <property type="interactions" value="81"/>
</dbReference>
<dbReference type="STRING" id="224308.BSU27000"/>
<dbReference type="PaxDb" id="224308-BSU27000"/>
<dbReference type="EnsemblBacteria" id="CAB14642">
    <property type="protein sequence ID" value="CAB14642"/>
    <property type="gene ID" value="BSU_27000"/>
</dbReference>
<dbReference type="GeneID" id="937605"/>
<dbReference type="KEGG" id="bsu:BSU27000"/>
<dbReference type="PATRIC" id="fig|224308.179.peg.2932"/>
<dbReference type="eggNOG" id="COG0789">
    <property type="taxonomic scope" value="Bacteria"/>
</dbReference>
<dbReference type="InParanoid" id="O06008"/>
<dbReference type="OrthoDB" id="9811174at2"/>
<dbReference type="PhylomeDB" id="O06008"/>
<dbReference type="BioCyc" id="BSUB:BSU27000-MONOMER"/>
<dbReference type="Proteomes" id="UP000001570">
    <property type="component" value="Chromosome"/>
</dbReference>
<dbReference type="GO" id="GO:0003677">
    <property type="term" value="F:DNA binding"/>
    <property type="evidence" value="ECO:0007669"/>
    <property type="project" value="UniProtKB-KW"/>
</dbReference>
<dbReference type="GO" id="GO:0003700">
    <property type="term" value="F:DNA-binding transcription factor activity"/>
    <property type="evidence" value="ECO:0000318"/>
    <property type="project" value="GO_Central"/>
</dbReference>
<dbReference type="GO" id="GO:0006355">
    <property type="term" value="P:regulation of DNA-templated transcription"/>
    <property type="evidence" value="ECO:0000318"/>
    <property type="project" value="GO_Central"/>
</dbReference>
<dbReference type="CDD" id="cd01109">
    <property type="entry name" value="HTH_YyaN"/>
    <property type="match status" value="1"/>
</dbReference>
<dbReference type="Gene3D" id="1.10.1660.10">
    <property type="match status" value="1"/>
</dbReference>
<dbReference type="InterPro" id="IPR009061">
    <property type="entry name" value="DNA-bd_dom_put_sf"/>
</dbReference>
<dbReference type="InterPro" id="IPR000551">
    <property type="entry name" value="MerR-type_HTH_dom"/>
</dbReference>
<dbReference type="InterPro" id="IPR047057">
    <property type="entry name" value="MerR_fam"/>
</dbReference>
<dbReference type="PANTHER" id="PTHR30204:SF98">
    <property type="entry name" value="HTH-TYPE TRANSCRIPTIONAL REGULATOR ADHR"/>
    <property type="match status" value="1"/>
</dbReference>
<dbReference type="PANTHER" id="PTHR30204">
    <property type="entry name" value="REDOX-CYCLING DRUG-SENSING TRANSCRIPTIONAL ACTIVATOR SOXR"/>
    <property type="match status" value="1"/>
</dbReference>
<dbReference type="Pfam" id="PF13411">
    <property type="entry name" value="MerR_1"/>
    <property type="match status" value="1"/>
</dbReference>
<dbReference type="PRINTS" id="PR00040">
    <property type="entry name" value="HTHMERR"/>
</dbReference>
<dbReference type="SMART" id="SM00422">
    <property type="entry name" value="HTH_MERR"/>
    <property type="match status" value="1"/>
</dbReference>
<dbReference type="SUPFAM" id="SSF46955">
    <property type="entry name" value="Putative DNA-binding domain"/>
    <property type="match status" value="1"/>
</dbReference>
<dbReference type="PROSITE" id="PS50937">
    <property type="entry name" value="HTH_MERR_2"/>
    <property type="match status" value="1"/>
</dbReference>